<reference key="1">
    <citation type="journal article" date="2007" name="BMC Biol.">
        <title>A clade uniting the green algae Mesostigma viride and Chlorokybus atmophyticus represents the deepest branch of the Streptophyta in chloroplast genome-based phylogenies.</title>
        <authorList>
            <person name="Lemieux C."/>
            <person name="Otis C."/>
            <person name="Turmel M."/>
        </authorList>
    </citation>
    <scope>NUCLEOTIDE SEQUENCE [LARGE SCALE GENOMIC DNA]</scope>
    <source>
        <strain>SAG 48.80</strain>
    </source>
</reference>
<organism>
    <name type="scientific">Chlorokybus atmophyticus</name>
    <name type="common">Soil alga</name>
    <dbReference type="NCBI Taxonomy" id="3144"/>
    <lineage>
        <taxon>Eukaryota</taxon>
        <taxon>Viridiplantae</taxon>
        <taxon>Streptophyta</taxon>
        <taxon>Chlorokybophyceae</taxon>
        <taxon>Chlorokybales</taxon>
        <taxon>Chlorokybaceae</taxon>
        <taxon>Chlorokybus</taxon>
    </lineage>
</organism>
<name>CHLB_CHLAT</name>
<gene>
    <name evidence="1" type="primary">chlB</name>
</gene>
<protein>
    <recommendedName>
        <fullName evidence="1">Light-independent protochlorophyllide reductase subunit B</fullName>
        <shortName evidence="1">DPOR subunit B</shortName>
        <shortName evidence="1">LI-POR subunit B</shortName>
        <ecNumber evidence="1">1.3.7.7</ecNumber>
    </recommendedName>
</protein>
<accession>Q19V92</accession>
<feature type="chain" id="PRO_0000324047" description="Light-independent protochlorophyllide reductase subunit B">
    <location>
        <begin position="1"/>
        <end position="510"/>
    </location>
</feature>
<feature type="active site" description="Proton donor" evidence="1">
    <location>
        <position position="296"/>
    </location>
</feature>
<feature type="binding site" evidence="1">
    <location>
        <position position="36"/>
    </location>
    <ligand>
        <name>[4Fe-4S] cluster</name>
        <dbReference type="ChEBI" id="CHEBI:49883"/>
        <note>ligand shared with heterodimeric partner</note>
    </ligand>
</feature>
<feature type="binding site" evidence="1">
    <location>
        <begin position="431"/>
        <end position="432"/>
    </location>
    <ligand>
        <name>substrate</name>
    </ligand>
</feature>
<dbReference type="EC" id="1.3.7.7" evidence="1"/>
<dbReference type="EMBL" id="DQ422812">
    <property type="protein sequence ID" value="ABD62177.2"/>
    <property type="molecule type" value="Genomic_DNA"/>
</dbReference>
<dbReference type="RefSeq" id="YP_001019110.1">
    <property type="nucleotide sequence ID" value="NC_008822.1"/>
</dbReference>
<dbReference type="SMR" id="Q19V92"/>
<dbReference type="GeneID" id="4783226"/>
<dbReference type="UniPathway" id="UPA00670"/>
<dbReference type="GO" id="GO:0009507">
    <property type="term" value="C:chloroplast"/>
    <property type="evidence" value="ECO:0007669"/>
    <property type="project" value="UniProtKB-SubCell"/>
</dbReference>
<dbReference type="GO" id="GO:0051539">
    <property type="term" value="F:4 iron, 4 sulfur cluster binding"/>
    <property type="evidence" value="ECO:0007669"/>
    <property type="project" value="UniProtKB-UniRule"/>
</dbReference>
<dbReference type="GO" id="GO:0005524">
    <property type="term" value="F:ATP binding"/>
    <property type="evidence" value="ECO:0007669"/>
    <property type="project" value="UniProtKB-UniRule"/>
</dbReference>
<dbReference type="GO" id="GO:0046872">
    <property type="term" value="F:metal ion binding"/>
    <property type="evidence" value="ECO:0007669"/>
    <property type="project" value="UniProtKB-KW"/>
</dbReference>
<dbReference type="GO" id="GO:0016730">
    <property type="term" value="F:oxidoreductase activity, acting on iron-sulfur proteins as donors"/>
    <property type="evidence" value="ECO:0007669"/>
    <property type="project" value="InterPro"/>
</dbReference>
<dbReference type="GO" id="GO:0016636">
    <property type="term" value="F:oxidoreductase activity, acting on the CH-CH group of donors, iron-sulfur protein as acceptor"/>
    <property type="evidence" value="ECO:0007669"/>
    <property type="project" value="UniProtKB-UniRule"/>
</dbReference>
<dbReference type="GO" id="GO:0036068">
    <property type="term" value="P:light-independent chlorophyll biosynthetic process"/>
    <property type="evidence" value="ECO:0007669"/>
    <property type="project" value="UniProtKB-UniRule"/>
</dbReference>
<dbReference type="GO" id="GO:0019685">
    <property type="term" value="P:photosynthesis, dark reaction"/>
    <property type="evidence" value="ECO:0007669"/>
    <property type="project" value="InterPro"/>
</dbReference>
<dbReference type="CDD" id="cd01981">
    <property type="entry name" value="Pchlide_reductase_B"/>
    <property type="match status" value="1"/>
</dbReference>
<dbReference type="Gene3D" id="1.20.89.20">
    <property type="match status" value="1"/>
</dbReference>
<dbReference type="Gene3D" id="3.40.50.1980">
    <property type="entry name" value="Nitrogenase molybdenum iron protein domain"/>
    <property type="match status" value="3"/>
</dbReference>
<dbReference type="Gene3D" id="1.10.8.550">
    <property type="entry name" value="Proto-chlorophyllide reductase 57 kD subunit B"/>
    <property type="match status" value="1"/>
</dbReference>
<dbReference type="HAMAP" id="MF_00353">
    <property type="entry name" value="ChlB_BchB"/>
    <property type="match status" value="1"/>
</dbReference>
<dbReference type="InterPro" id="IPR050152">
    <property type="entry name" value="ChlB/BchB/BchZ"/>
</dbReference>
<dbReference type="InterPro" id="IPR013580">
    <property type="entry name" value="LI-POR_suB-like_C"/>
</dbReference>
<dbReference type="InterPro" id="IPR000510">
    <property type="entry name" value="Nase/OxRdtase_comp1"/>
</dbReference>
<dbReference type="InterPro" id="IPR042298">
    <property type="entry name" value="P-CP_red_C"/>
</dbReference>
<dbReference type="InterPro" id="IPR005969">
    <property type="entry name" value="Protochl_reductB"/>
</dbReference>
<dbReference type="InterPro" id="IPR016209">
    <property type="entry name" value="Protochlorophyllide_Rdtase"/>
</dbReference>
<dbReference type="NCBIfam" id="TIGR01278">
    <property type="entry name" value="DPOR_BchB"/>
    <property type="match status" value="1"/>
</dbReference>
<dbReference type="PANTHER" id="PTHR33712">
    <property type="entry name" value="LIGHT-INDEPENDENT PROTOCHLOROPHYLLIDE REDUCTASE SUBUNIT B"/>
    <property type="match status" value="1"/>
</dbReference>
<dbReference type="PANTHER" id="PTHR33712:SF7">
    <property type="entry name" value="LIGHT-INDEPENDENT PROTOCHLOROPHYLLIDE REDUCTASE SUBUNIT B"/>
    <property type="match status" value="1"/>
</dbReference>
<dbReference type="Pfam" id="PF00148">
    <property type="entry name" value="Oxidored_nitro"/>
    <property type="match status" value="1"/>
</dbReference>
<dbReference type="Pfam" id="PF08369">
    <property type="entry name" value="PCP_red"/>
    <property type="match status" value="1"/>
</dbReference>
<dbReference type="PIRSF" id="PIRSF000163">
    <property type="entry name" value="PCP_ChlB"/>
    <property type="match status" value="1"/>
</dbReference>
<dbReference type="SUPFAM" id="SSF53807">
    <property type="entry name" value="Helical backbone' metal receptor"/>
    <property type="match status" value="1"/>
</dbReference>
<sequence>MKLAYWMYAGPAHIGTLRVASSFKNVHAIMHAPLGDDYFNVMRSMLERERDFTPVTASIVDRHVLARGSQNKVVENITRKDKEERPDLIVLTPTCTSSILQEDLQNFVDRASMDSESDVILADVNHYRVNELQAADRTLEQVVRFYIEKSKKQGDLNLTKTEKPSANILGIFTLGFHNQHDCRELKRLLQELGIEINEVIPEGGSVNNLKNLPRAWFNLVPYREVGLMTAIYLEKEFGMPYVSTTPMGVVDTATCIREIEKILNSFDKDVVVDFESYIDKQTRFVSQAAWFSRSIDCQNLTGKKAVVFGDATHAASMTKILAREMGINVACAGTYCKHDADWFKEQVQGYCDEVLITDDHTEVGDLIARIEPSAIFGTQMERHIGKRLNIPCGVISAPVHIQNFPLGYRPFLGYEGTNQIADLVYNSFTLGMEDHLLEIFGGHDTKEVITKSLSTEEGLTWTSDAQAELSKIPGFVRGKIKRNTEKFARENNISEINIEVMYAAKESLNA</sequence>
<keyword id="KW-0004">4Fe-4S</keyword>
<keyword id="KW-0067">ATP-binding</keyword>
<keyword id="KW-0149">Chlorophyll biosynthesis</keyword>
<keyword id="KW-0150">Chloroplast</keyword>
<keyword id="KW-0408">Iron</keyword>
<keyword id="KW-0411">Iron-sulfur</keyword>
<keyword id="KW-0479">Metal-binding</keyword>
<keyword id="KW-0547">Nucleotide-binding</keyword>
<keyword id="KW-0560">Oxidoreductase</keyword>
<keyword id="KW-0602">Photosynthesis</keyword>
<keyword id="KW-0934">Plastid</keyword>
<comment type="function">
    <text evidence="1">Component of the dark-operative protochlorophyllide reductase (DPOR) that uses Mg-ATP and reduced ferredoxin to reduce ring D of protochlorophyllide (Pchlide) to form chlorophyllide a (Chlide). This reaction is light-independent. The NB-protein (ChlN-ChlB) is the catalytic component of the complex.</text>
</comment>
<comment type="catalytic activity">
    <reaction evidence="1">
        <text>chlorophyllide a + oxidized 2[4Fe-4S]-[ferredoxin] + 2 ADP + 2 phosphate = protochlorophyllide a + reduced 2[4Fe-4S]-[ferredoxin] + 2 ATP + 2 H2O</text>
        <dbReference type="Rhea" id="RHEA:28202"/>
        <dbReference type="Rhea" id="RHEA-COMP:10002"/>
        <dbReference type="Rhea" id="RHEA-COMP:10004"/>
        <dbReference type="ChEBI" id="CHEBI:15377"/>
        <dbReference type="ChEBI" id="CHEBI:30616"/>
        <dbReference type="ChEBI" id="CHEBI:33722"/>
        <dbReference type="ChEBI" id="CHEBI:33723"/>
        <dbReference type="ChEBI" id="CHEBI:43474"/>
        <dbReference type="ChEBI" id="CHEBI:83348"/>
        <dbReference type="ChEBI" id="CHEBI:83350"/>
        <dbReference type="ChEBI" id="CHEBI:456216"/>
        <dbReference type="EC" id="1.3.7.7"/>
    </reaction>
</comment>
<comment type="cofactor">
    <cofactor evidence="1">
        <name>[4Fe-4S] cluster</name>
        <dbReference type="ChEBI" id="CHEBI:49883"/>
    </cofactor>
    <text evidence="1">Binds 1 [4Fe-4S] cluster per heterodimer. The cluster is bound at the heterodimer interface by residues from both subunits.</text>
</comment>
<comment type="pathway">
    <text evidence="1">Porphyrin-containing compound metabolism; chlorophyll biosynthesis (light-independent).</text>
</comment>
<comment type="subunit">
    <text evidence="1">Protochlorophyllide reductase is composed of three subunits; ChlL, ChlN and ChlB. Forms a heterotetramer of two ChlB and two ChlN subunits.</text>
</comment>
<comment type="subcellular location">
    <subcellularLocation>
        <location>Plastid</location>
        <location>Chloroplast</location>
    </subcellularLocation>
</comment>
<comment type="similarity">
    <text evidence="1">Belongs to the ChlB/BchB/BchZ family.</text>
</comment>
<geneLocation type="chloroplast"/>
<proteinExistence type="inferred from homology"/>
<evidence type="ECO:0000255" key="1">
    <source>
        <dbReference type="HAMAP-Rule" id="MF_00353"/>
    </source>
</evidence>